<keyword id="KW-0963">Cytoplasm</keyword>
<keyword id="KW-0312">Gluconeogenesis</keyword>
<keyword id="KW-0324">Glycolysis</keyword>
<keyword id="KW-0413">Isomerase</keyword>
<keyword id="KW-1185">Reference proteome</keyword>
<evidence type="ECO:0000255" key="1">
    <source>
        <dbReference type="HAMAP-Rule" id="MF_00473"/>
    </source>
</evidence>
<gene>
    <name evidence="1" type="primary">pgi</name>
    <name type="ordered locus">Rmet_1879</name>
</gene>
<sequence length="541" mass="59349">MPTDLQAWNALRQHHDVVRETPMQQWFAEAGAAQRVDAFSLEASGLYLDYSKNRITGETLALLMKLAEEAGVPARRDAMFAGEHINATEDRAALHVALRALPDAPFKVDGASVMPAIHDVLRRMREFAGRVRSGVWTGSTGQGITDIVNIGIGGSDLGPRMVCRALAHLADPRGPRVHFVSNVDGTELAETLQRLDPARTLAIVCSKTFTTLETMANACSMRDWFLRHGVAENQLARHFVAVSTNRDAVVDFGIDPNNMFEFWDWIGGRFSLWSSVGLSIALAVGFDAFEDLLLGARAMDDHFRTAPLAQNMPVVMAMLGIWYRNFHDMPTSCMAPYSTSLELFPAFLQQLEMESNGKSVQLDGRPVDADTAPVVWGTAGTNGQHAYFQMIHQGSQIVPVDFVAPLVPPRELPGHHVKLLANCFAQAEALMRGRSAEELQAAGVDAARIPHMVFEGNRPSNMLLMENLTPHVLGALIALYEHRTFVQGIVWNINSFDQWGVELGKILARPIEAELSGNATEAHDASTAALIARARRSLARS</sequence>
<proteinExistence type="inferred from homology"/>
<comment type="function">
    <text evidence="1">Catalyzes the reversible isomerization of glucose-6-phosphate to fructose-6-phosphate.</text>
</comment>
<comment type="catalytic activity">
    <reaction evidence="1">
        <text>alpha-D-glucose 6-phosphate = beta-D-fructose 6-phosphate</text>
        <dbReference type="Rhea" id="RHEA:11816"/>
        <dbReference type="ChEBI" id="CHEBI:57634"/>
        <dbReference type="ChEBI" id="CHEBI:58225"/>
        <dbReference type="EC" id="5.3.1.9"/>
    </reaction>
</comment>
<comment type="pathway">
    <text evidence="1">Carbohydrate biosynthesis; gluconeogenesis.</text>
</comment>
<comment type="pathway">
    <text evidence="1">Carbohydrate degradation; glycolysis; D-glyceraldehyde 3-phosphate and glycerone phosphate from D-glucose: step 2/4.</text>
</comment>
<comment type="subcellular location">
    <subcellularLocation>
        <location evidence="1">Cytoplasm</location>
    </subcellularLocation>
</comment>
<comment type="similarity">
    <text evidence="1">Belongs to the GPI family.</text>
</comment>
<reference key="1">
    <citation type="journal article" date="2010" name="PLoS ONE">
        <title>The complete genome sequence of Cupriavidus metallidurans strain CH34, a master survivalist in harsh and anthropogenic environments.</title>
        <authorList>
            <person name="Janssen P.J."/>
            <person name="Van Houdt R."/>
            <person name="Moors H."/>
            <person name="Monsieurs P."/>
            <person name="Morin N."/>
            <person name="Michaux A."/>
            <person name="Benotmane M.A."/>
            <person name="Leys N."/>
            <person name="Vallaeys T."/>
            <person name="Lapidus A."/>
            <person name="Monchy S."/>
            <person name="Medigue C."/>
            <person name="Taghavi S."/>
            <person name="McCorkle S."/>
            <person name="Dunn J."/>
            <person name="van der Lelie D."/>
            <person name="Mergeay M."/>
        </authorList>
    </citation>
    <scope>NUCLEOTIDE SEQUENCE [LARGE SCALE GENOMIC DNA]</scope>
    <source>
        <strain>ATCC 43123 / DSM 2839 / NBRC 102507 / CH34</strain>
    </source>
</reference>
<name>G6PI_CUPMC</name>
<accession>Q1LM68</accession>
<protein>
    <recommendedName>
        <fullName evidence="1">Glucose-6-phosphate isomerase</fullName>
        <shortName evidence="1">GPI</shortName>
        <ecNumber evidence="1">5.3.1.9</ecNumber>
    </recommendedName>
    <alternativeName>
        <fullName evidence="1">Phosphoglucose isomerase</fullName>
        <shortName evidence="1">PGI</shortName>
    </alternativeName>
    <alternativeName>
        <fullName evidence="1">Phosphohexose isomerase</fullName>
        <shortName evidence="1">PHI</shortName>
    </alternativeName>
</protein>
<organism>
    <name type="scientific">Cupriavidus metallidurans (strain ATCC 43123 / DSM 2839 / NBRC 102507 / CH34)</name>
    <name type="common">Ralstonia metallidurans</name>
    <dbReference type="NCBI Taxonomy" id="266264"/>
    <lineage>
        <taxon>Bacteria</taxon>
        <taxon>Pseudomonadati</taxon>
        <taxon>Pseudomonadota</taxon>
        <taxon>Betaproteobacteria</taxon>
        <taxon>Burkholderiales</taxon>
        <taxon>Burkholderiaceae</taxon>
        <taxon>Cupriavidus</taxon>
    </lineage>
</organism>
<dbReference type="EC" id="5.3.1.9" evidence="1"/>
<dbReference type="EMBL" id="CP000352">
    <property type="protein sequence ID" value="ABF08758.1"/>
    <property type="molecule type" value="Genomic_DNA"/>
</dbReference>
<dbReference type="RefSeq" id="WP_011516605.1">
    <property type="nucleotide sequence ID" value="NC_007973.1"/>
</dbReference>
<dbReference type="SMR" id="Q1LM68"/>
<dbReference type="STRING" id="266264.Rmet_1879"/>
<dbReference type="KEGG" id="rme:Rmet_1879"/>
<dbReference type="eggNOG" id="COG0166">
    <property type="taxonomic scope" value="Bacteria"/>
</dbReference>
<dbReference type="HOGENOM" id="CLU_017947_3_1_4"/>
<dbReference type="UniPathway" id="UPA00109">
    <property type="reaction ID" value="UER00181"/>
</dbReference>
<dbReference type="UniPathway" id="UPA00138"/>
<dbReference type="Proteomes" id="UP000002429">
    <property type="component" value="Chromosome"/>
</dbReference>
<dbReference type="GO" id="GO:0005829">
    <property type="term" value="C:cytosol"/>
    <property type="evidence" value="ECO:0007669"/>
    <property type="project" value="TreeGrafter"/>
</dbReference>
<dbReference type="GO" id="GO:0097367">
    <property type="term" value="F:carbohydrate derivative binding"/>
    <property type="evidence" value="ECO:0007669"/>
    <property type="project" value="InterPro"/>
</dbReference>
<dbReference type="GO" id="GO:0004347">
    <property type="term" value="F:glucose-6-phosphate isomerase activity"/>
    <property type="evidence" value="ECO:0007669"/>
    <property type="project" value="UniProtKB-UniRule"/>
</dbReference>
<dbReference type="GO" id="GO:0048029">
    <property type="term" value="F:monosaccharide binding"/>
    <property type="evidence" value="ECO:0007669"/>
    <property type="project" value="TreeGrafter"/>
</dbReference>
<dbReference type="GO" id="GO:0006094">
    <property type="term" value="P:gluconeogenesis"/>
    <property type="evidence" value="ECO:0007669"/>
    <property type="project" value="UniProtKB-UniRule"/>
</dbReference>
<dbReference type="GO" id="GO:0051156">
    <property type="term" value="P:glucose 6-phosphate metabolic process"/>
    <property type="evidence" value="ECO:0007669"/>
    <property type="project" value="TreeGrafter"/>
</dbReference>
<dbReference type="GO" id="GO:0006096">
    <property type="term" value="P:glycolytic process"/>
    <property type="evidence" value="ECO:0007669"/>
    <property type="project" value="UniProtKB-UniRule"/>
</dbReference>
<dbReference type="CDD" id="cd05015">
    <property type="entry name" value="SIS_PGI_1"/>
    <property type="match status" value="1"/>
</dbReference>
<dbReference type="CDD" id="cd05016">
    <property type="entry name" value="SIS_PGI_2"/>
    <property type="match status" value="1"/>
</dbReference>
<dbReference type="FunFam" id="3.40.50.10490:FF:000018">
    <property type="entry name" value="Glucose-6-phosphate isomerase"/>
    <property type="match status" value="1"/>
</dbReference>
<dbReference type="Gene3D" id="1.10.1390.10">
    <property type="match status" value="1"/>
</dbReference>
<dbReference type="Gene3D" id="3.40.50.10490">
    <property type="entry name" value="Glucose-6-phosphate isomerase like protein, domain 1"/>
    <property type="match status" value="2"/>
</dbReference>
<dbReference type="HAMAP" id="MF_00473">
    <property type="entry name" value="G6P_isomerase"/>
    <property type="match status" value="1"/>
</dbReference>
<dbReference type="InterPro" id="IPR001672">
    <property type="entry name" value="G6P_Isomerase"/>
</dbReference>
<dbReference type="InterPro" id="IPR023096">
    <property type="entry name" value="G6P_Isomerase_C"/>
</dbReference>
<dbReference type="InterPro" id="IPR018189">
    <property type="entry name" value="Phosphoglucose_isomerase_CS"/>
</dbReference>
<dbReference type="InterPro" id="IPR046348">
    <property type="entry name" value="SIS_dom_sf"/>
</dbReference>
<dbReference type="InterPro" id="IPR035476">
    <property type="entry name" value="SIS_PGI_1"/>
</dbReference>
<dbReference type="InterPro" id="IPR035482">
    <property type="entry name" value="SIS_PGI_2"/>
</dbReference>
<dbReference type="NCBIfam" id="NF001211">
    <property type="entry name" value="PRK00179.1"/>
    <property type="match status" value="1"/>
</dbReference>
<dbReference type="PANTHER" id="PTHR11469">
    <property type="entry name" value="GLUCOSE-6-PHOSPHATE ISOMERASE"/>
    <property type="match status" value="1"/>
</dbReference>
<dbReference type="PANTHER" id="PTHR11469:SF1">
    <property type="entry name" value="GLUCOSE-6-PHOSPHATE ISOMERASE"/>
    <property type="match status" value="1"/>
</dbReference>
<dbReference type="Pfam" id="PF00342">
    <property type="entry name" value="PGI"/>
    <property type="match status" value="1"/>
</dbReference>
<dbReference type="PRINTS" id="PR00662">
    <property type="entry name" value="G6PISOMERASE"/>
</dbReference>
<dbReference type="SUPFAM" id="SSF53697">
    <property type="entry name" value="SIS domain"/>
    <property type="match status" value="1"/>
</dbReference>
<dbReference type="PROSITE" id="PS00765">
    <property type="entry name" value="P_GLUCOSE_ISOMERASE_1"/>
    <property type="match status" value="1"/>
</dbReference>
<dbReference type="PROSITE" id="PS00174">
    <property type="entry name" value="P_GLUCOSE_ISOMERASE_2"/>
    <property type="match status" value="1"/>
</dbReference>
<dbReference type="PROSITE" id="PS51463">
    <property type="entry name" value="P_GLUCOSE_ISOMERASE_3"/>
    <property type="match status" value="1"/>
</dbReference>
<feature type="chain" id="PRO_0000252634" description="Glucose-6-phosphate isomerase">
    <location>
        <begin position="1"/>
        <end position="541"/>
    </location>
</feature>
<feature type="active site" description="Proton donor" evidence="1">
    <location>
        <position position="354"/>
    </location>
</feature>
<feature type="active site" evidence="1">
    <location>
        <position position="385"/>
    </location>
</feature>
<feature type="active site" evidence="1">
    <location>
        <position position="505"/>
    </location>
</feature>